<feature type="chain" id="PRO_1000088617" description="Tyrosine--tRNA ligase">
    <location>
        <begin position="1"/>
        <end position="411"/>
    </location>
</feature>
<feature type="domain" description="S4 RNA-binding" evidence="1">
    <location>
        <begin position="345"/>
        <end position="411"/>
    </location>
</feature>
<feature type="short sequence motif" description="'HIGH' region">
    <location>
        <begin position="39"/>
        <end position="48"/>
    </location>
</feature>
<feature type="short sequence motif" description="'KMSKS' region">
    <location>
        <begin position="231"/>
        <end position="235"/>
    </location>
</feature>
<feature type="binding site" evidence="1">
    <location>
        <position position="34"/>
    </location>
    <ligand>
        <name>L-tyrosine</name>
        <dbReference type="ChEBI" id="CHEBI:58315"/>
    </ligand>
</feature>
<feature type="binding site" evidence="1">
    <location>
        <position position="171"/>
    </location>
    <ligand>
        <name>L-tyrosine</name>
        <dbReference type="ChEBI" id="CHEBI:58315"/>
    </ligand>
</feature>
<feature type="binding site" evidence="1">
    <location>
        <position position="175"/>
    </location>
    <ligand>
        <name>L-tyrosine</name>
        <dbReference type="ChEBI" id="CHEBI:58315"/>
    </ligand>
</feature>
<feature type="binding site" evidence="1">
    <location>
        <position position="234"/>
    </location>
    <ligand>
        <name>ATP</name>
        <dbReference type="ChEBI" id="CHEBI:30616"/>
    </ligand>
</feature>
<sequence length="411" mass="46620">MRFIEEFINKGYFHQCTDLDRLTAITKETKIAAYIGFDCTATSLHIGSLMQIMILRLLQQHGHKPIVIIGGGTSKIGDPTWKDEVRKILSKEDIAKNAEGIKKSLSKFIKFGDGKSDAIMLDNAEWLDSFNYLDFLRDFGSYFSVNRMLTMDSVKLRLEREQHLSFLEFNYMLLQAYDFYYLSKHYNCSLQLGGSDQWGNIVMGADLIRKISGKEVFGMTTPLLTTSSGAKMGKTAAGAVWLNEDLLSPYDYYQYWRNCEDADIVRFAKLYSEFTQEELNRFESLAAEDINAAKKQLAYELTKLCHSEQAAKSALETAVKIFEEGQIDENLPTVVLEQEVLQAGISAYELFYEAGLATSKSEARKLIRGNGAKINDRLVADENMIINTNFLLDKKVIKLSAGKKRHILVRV</sequence>
<dbReference type="EC" id="6.1.1.1" evidence="1"/>
<dbReference type="EMBL" id="CP000848">
    <property type="protein sequence ID" value="ABV76426.1"/>
    <property type="molecule type" value="Genomic_DNA"/>
</dbReference>
<dbReference type="RefSeq" id="WP_012150999.1">
    <property type="nucleotide sequence ID" value="NZ_CP121767.1"/>
</dbReference>
<dbReference type="SMR" id="A8GSQ1"/>
<dbReference type="GeneID" id="79937531"/>
<dbReference type="KEGG" id="rri:A1G_04630"/>
<dbReference type="HOGENOM" id="CLU_024003_0_3_5"/>
<dbReference type="Proteomes" id="UP000006832">
    <property type="component" value="Chromosome"/>
</dbReference>
<dbReference type="GO" id="GO:0005829">
    <property type="term" value="C:cytosol"/>
    <property type="evidence" value="ECO:0007669"/>
    <property type="project" value="TreeGrafter"/>
</dbReference>
<dbReference type="GO" id="GO:0005524">
    <property type="term" value="F:ATP binding"/>
    <property type="evidence" value="ECO:0007669"/>
    <property type="project" value="UniProtKB-UniRule"/>
</dbReference>
<dbReference type="GO" id="GO:0003723">
    <property type="term" value="F:RNA binding"/>
    <property type="evidence" value="ECO:0007669"/>
    <property type="project" value="UniProtKB-KW"/>
</dbReference>
<dbReference type="GO" id="GO:0004831">
    <property type="term" value="F:tyrosine-tRNA ligase activity"/>
    <property type="evidence" value="ECO:0007669"/>
    <property type="project" value="UniProtKB-UniRule"/>
</dbReference>
<dbReference type="GO" id="GO:0006437">
    <property type="term" value="P:tyrosyl-tRNA aminoacylation"/>
    <property type="evidence" value="ECO:0007669"/>
    <property type="project" value="UniProtKB-UniRule"/>
</dbReference>
<dbReference type="CDD" id="cd00165">
    <property type="entry name" value="S4"/>
    <property type="match status" value="1"/>
</dbReference>
<dbReference type="CDD" id="cd00805">
    <property type="entry name" value="TyrRS_core"/>
    <property type="match status" value="1"/>
</dbReference>
<dbReference type="FunFam" id="1.10.240.10:FF:000001">
    <property type="entry name" value="Tyrosine--tRNA ligase"/>
    <property type="match status" value="1"/>
</dbReference>
<dbReference type="Gene3D" id="3.40.50.620">
    <property type="entry name" value="HUPs"/>
    <property type="match status" value="1"/>
</dbReference>
<dbReference type="Gene3D" id="3.10.290.10">
    <property type="entry name" value="RNA-binding S4 domain"/>
    <property type="match status" value="1"/>
</dbReference>
<dbReference type="Gene3D" id="1.10.240.10">
    <property type="entry name" value="Tyrosyl-Transfer RNA Synthetase"/>
    <property type="match status" value="1"/>
</dbReference>
<dbReference type="HAMAP" id="MF_02006">
    <property type="entry name" value="Tyr_tRNA_synth_type1"/>
    <property type="match status" value="1"/>
</dbReference>
<dbReference type="InterPro" id="IPR002305">
    <property type="entry name" value="aa-tRNA-synth_Ic"/>
</dbReference>
<dbReference type="InterPro" id="IPR014729">
    <property type="entry name" value="Rossmann-like_a/b/a_fold"/>
</dbReference>
<dbReference type="InterPro" id="IPR036986">
    <property type="entry name" value="S4_RNA-bd_sf"/>
</dbReference>
<dbReference type="InterPro" id="IPR054608">
    <property type="entry name" value="SYY-like_C"/>
</dbReference>
<dbReference type="InterPro" id="IPR002307">
    <property type="entry name" value="Tyr-tRNA-ligase"/>
</dbReference>
<dbReference type="InterPro" id="IPR024088">
    <property type="entry name" value="Tyr-tRNA-ligase_bac-type"/>
</dbReference>
<dbReference type="InterPro" id="IPR024107">
    <property type="entry name" value="Tyr-tRNA-ligase_bac_1"/>
</dbReference>
<dbReference type="NCBIfam" id="TIGR00234">
    <property type="entry name" value="tyrS"/>
    <property type="match status" value="1"/>
</dbReference>
<dbReference type="PANTHER" id="PTHR11766:SF0">
    <property type="entry name" value="TYROSINE--TRNA LIGASE, MITOCHONDRIAL"/>
    <property type="match status" value="1"/>
</dbReference>
<dbReference type="PANTHER" id="PTHR11766">
    <property type="entry name" value="TYROSYL-TRNA SYNTHETASE"/>
    <property type="match status" value="1"/>
</dbReference>
<dbReference type="Pfam" id="PF22421">
    <property type="entry name" value="SYY_C-terminal"/>
    <property type="match status" value="1"/>
</dbReference>
<dbReference type="Pfam" id="PF00579">
    <property type="entry name" value="tRNA-synt_1b"/>
    <property type="match status" value="1"/>
</dbReference>
<dbReference type="PRINTS" id="PR01040">
    <property type="entry name" value="TRNASYNTHTYR"/>
</dbReference>
<dbReference type="SUPFAM" id="SSF55174">
    <property type="entry name" value="Alpha-L RNA-binding motif"/>
    <property type="match status" value="1"/>
</dbReference>
<dbReference type="SUPFAM" id="SSF52374">
    <property type="entry name" value="Nucleotidylyl transferase"/>
    <property type="match status" value="1"/>
</dbReference>
<dbReference type="PROSITE" id="PS50889">
    <property type="entry name" value="S4"/>
    <property type="match status" value="1"/>
</dbReference>
<organism>
    <name type="scientific">Rickettsia rickettsii (strain Sheila Smith)</name>
    <dbReference type="NCBI Taxonomy" id="392021"/>
    <lineage>
        <taxon>Bacteria</taxon>
        <taxon>Pseudomonadati</taxon>
        <taxon>Pseudomonadota</taxon>
        <taxon>Alphaproteobacteria</taxon>
        <taxon>Rickettsiales</taxon>
        <taxon>Rickettsiaceae</taxon>
        <taxon>Rickettsieae</taxon>
        <taxon>Rickettsia</taxon>
        <taxon>spotted fever group</taxon>
    </lineage>
</organism>
<comment type="function">
    <text evidence="1">Catalyzes the attachment of tyrosine to tRNA(Tyr) in a two-step reaction: tyrosine is first activated by ATP to form Tyr-AMP and then transferred to the acceptor end of tRNA(Tyr).</text>
</comment>
<comment type="catalytic activity">
    <reaction evidence="1">
        <text>tRNA(Tyr) + L-tyrosine + ATP = L-tyrosyl-tRNA(Tyr) + AMP + diphosphate + H(+)</text>
        <dbReference type="Rhea" id="RHEA:10220"/>
        <dbReference type="Rhea" id="RHEA-COMP:9706"/>
        <dbReference type="Rhea" id="RHEA-COMP:9707"/>
        <dbReference type="ChEBI" id="CHEBI:15378"/>
        <dbReference type="ChEBI" id="CHEBI:30616"/>
        <dbReference type="ChEBI" id="CHEBI:33019"/>
        <dbReference type="ChEBI" id="CHEBI:58315"/>
        <dbReference type="ChEBI" id="CHEBI:78442"/>
        <dbReference type="ChEBI" id="CHEBI:78536"/>
        <dbReference type="ChEBI" id="CHEBI:456215"/>
        <dbReference type="EC" id="6.1.1.1"/>
    </reaction>
</comment>
<comment type="subunit">
    <text evidence="1">Homodimer.</text>
</comment>
<comment type="subcellular location">
    <subcellularLocation>
        <location evidence="1">Cytoplasm</location>
    </subcellularLocation>
</comment>
<comment type="similarity">
    <text evidence="1">Belongs to the class-I aminoacyl-tRNA synthetase family. TyrS type 1 subfamily.</text>
</comment>
<accession>A8GSQ1</accession>
<protein>
    <recommendedName>
        <fullName evidence="1">Tyrosine--tRNA ligase</fullName>
        <ecNumber evidence="1">6.1.1.1</ecNumber>
    </recommendedName>
    <alternativeName>
        <fullName evidence="1">Tyrosyl-tRNA synthetase</fullName>
        <shortName evidence="1">TyrRS</shortName>
    </alternativeName>
</protein>
<evidence type="ECO:0000255" key="1">
    <source>
        <dbReference type="HAMAP-Rule" id="MF_02006"/>
    </source>
</evidence>
<reference key="1">
    <citation type="submission" date="2007-09" db="EMBL/GenBank/DDBJ databases">
        <title>Complete genome sequence of Rickettsia rickettsii.</title>
        <authorList>
            <person name="Madan A."/>
            <person name="Fahey J."/>
            <person name="Helton E."/>
            <person name="Ketteman M."/>
            <person name="Madan A."/>
            <person name="Rodrigues S."/>
            <person name="Sanchez A."/>
            <person name="Dasch G."/>
            <person name="Eremeeva M."/>
        </authorList>
    </citation>
    <scope>NUCLEOTIDE SEQUENCE [LARGE SCALE GENOMIC DNA]</scope>
    <source>
        <strain>Sheila Smith</strain>
    </source>
</reference>
<proteinExistence type="inferred from homology"/>
<keyword id="KW-0030">Aminoacyl-tRNA synthetase</keyword>
<keyword id="KW-0067">ATP-binding</keyword>
<keyword id="KW-0963">Cytoplasm</keyword>
<keyword id="KW-0436">Ligase</keyword>
<keyword id="KW-0547">Nucleotide-binding</keyword>
<keyword id="KW-0648">Protein biosynthesis</keyword>
<keyword id="KW-0694">RNA-binding</keyword>
<name>SYY_RICRS</name>
<gene>
    <name evidence="1" type="primary">tyrS</name>
    <name type="ordered locus">A1G_04630</name>
</gene>